<name>RS19_CORGL</name>
<accession>P66482</accession>
<accession>Q8NT03</accession>
<reference key="1">
    <citation type="journal article" date="2003" name="Appl. Microbiol. Biotechnol.">
        <title>The Corynebacterium glutamicum genome: features and impacts on biotechnological processes.</title>
        <authorList>
            <person name="Ikeda M."/>
            <person name="Nakagawa S."/>
        </authorList>
    </citation>
    <scope>NUCLEOTIDE SEQUENCE [LARGE SCALE GENOMIC DNA]</scope>
    <source>
        <strain>ATCC 13032 / DSM 20300 / JCM 1318 / BCRC 11384 / CCUG 27702 / LMG 3730 / NBRC 12168 / NCIMB 10025 / NRRL B-2784 / 534</strain>
    </source>
</reference>
<reference key="2">
    <citation type="journal article" date="2003" name="J. Biotechnol.">
        <title>The complete Corynebacterium glutamicum ATCC 13032 genome sequence and its impact on the production of L-aspartate-derived amino acids and vitamins.</title>
        <authorList>
            <person name="Kalinowski J."/>
            <person name="Bathe B."/>
            <person name="Bartels D."/>
            <person name="Bischoff N."/>
            <person name="Bott M."/>
            <person name="Burkovski A."/>
            <person name="Dusch N."/>
            <person name="Eggeling L."/>
            <person name="Eikmanns B.J."/>
            <person name="Gaigalat L."/>
            <person name="Goesmann A."/>
            <person name="Hartmann M."/>
            <person name="Huthmacher K."/>
            <person name="Kraemer R."/>
            <person name="Linke B."/>
            <person name="McHardy A.C."/>
            <person name="Meyer F."/>
            <person name="Moeckel B."/>
            <person name="Pfefferle W."/>
            <person name="Puehler A."/>
            <person name="Rey D.A."/>
            <person name="Rueckert C."/>
            <person name="Rupp O."/>
            <person name="Sahm H."/>
            <person name="Wendisch V.F."/>
            <person name="Wiegraebe I."/>
            <person name="Tauch A."/>
        </authorList>
    </citation>
    <scope>NUCLEOTIDE SEQUENCE [LARGE SCALE GENOMIC DNA]</scope>
    <source>
        <strain>ATCC 13032 / DSM 20300 / JCM 1318 / BCRC 11384 / CCUG 27702 / LMG 3730 / NBRC 12168 / NCIMB 10025 / NRRL B-2784 / 534</strain>
    </source>
</reference>
<keyword id="KW-1185">Reference proteome</keyword>
<keyword id="KW-0687">Ribonucleoprotein</keyword>
<keyword id="KW-0689">Ribosomal protein</keyword>
<keyword id="KW-0694">RNA-binding</keyword>
<keyword id="KW-0699">rRNA-binding</keyword>
<protein>
    <recommendedName>
        <fullName evidence="1">Small ribosomal subunit protein uS19</fullName>
    </recommendedName>
    <alternativeName>
        <fullName evidence="2">30S ribosomal protein S19</fullName>
    </alternativeName>
</protein>
<comment type="function">
    <text evidence="1">Protein S19 forms a complex with S13 that binds strongly to the 16S ribosomal RNA.</text>
</comment>
<comment type="similarity">
    <text evidence="1">Belongs to the universal ribosomal protein uS19 family.</text>
</comment>
<organism>
    <name type="scientific">Corynebacterium glutamicum (strain ATCC 13032 / DSM 20300 / JCM 1318 / BCRC 11384 / CCUG 27702 / LMG 3730 / NBRC 12168 / NCIMB 10025 / NRRL B-2784 / 534)</name>
    <dbReference type="NCBI Taxonomy" id="196627"/>
    <lineage>
        <taxon>Bacteria</taxon>
        <taxon>Bacillati</taxon>
        <taxon>Actinomycetota</taxon>
        <taxon>Actinomycetes</taxon>
        <taxon>Mycobacteriales</taxon>
        <taxon>Corynebacteriaceae</taxon>
        <taxon>Corynebacterium</taxon>
    </lineage>
</organism>
<evidence type="ECO:0000255" key="1">
    <source>
        <dbReference type="HAMAP-Rule" id="MF_00531"/>
    </source>
</evidence>
<evidence type="ECO:0000305" key="2"/>
<feature type="chain" id="PRO_0000129814" description="Small ribosomal subunit protein uS19">
    <location>
        <begin position="1"/>
        <end position="92"/>
    </location>
</feature>
<sequence>MPRSLKKGPFVDEHLLNKVDAQNEKGTKQVIKTWSRRSTILPDFIGHTFAVHDGRKHVPVFVDDAMVGHKLGEFAPTKTFKGHVKDDKKGRR</sequence>
<gene>
    <name evidence="1" type="primary">rpsS</name>
    <name type="ordered locus">Cgl0511</name>
    <name type="ordered locus">cg0599</name>
</gene>
<dbReference type="EMBL" id="BA000036">
    <property type="protein sequence ID" value="BAB97905.1"/>
    <property type="molecule type" value="Genomic_DNA"/>
</dbReference>
<dbReference type="EMBL" id="BX927149">
    <property type="protein sequence ID" value="CAF19221.1"/>
    <property type="molecule type" value="Genomic_DNA"/>
</dbReference>
<dbReference type="RefSeq" id="NP_599752.1">
    <property type="nucleotide sequence ID" value="NC_003450.3"/>
</dbReference>
<dbReference type="RefSeq" id="WP_003854296.1">
    <property type="nucleotide sequence ID" value="NC_006958.1"/>
</dbReference>
<dbReference type="SMR" id="P66482"/>
<dbReference type="STRING" id="196627.cg0599"/>
<dbReference type="GeneID" id="1021514"/>
<dbReference type="KEGG" id="cgb:cg0599"/>
<dbReference type="KEGG" id="cgl:Cgl0511"/>
<dbReference type="PATRIC" id="fig|196627.13.peg.507"/>
<dbReference type="eggNOG" id="COG0185">
    <property type="taxonomic scope" value="Bacteria"/>
</dbReference>
<dbReference type="HOGENOM" id="CLU_144911_0_1_11"/>
<dbReference type="OrthoDB" id="9797833at2"/>
<dbReference type="BioCyc" id="CORYNE:G18NG-10074-MONOMER"/>
<dbReference type="Proteomes" id="UP000000582">
    <property type="component" value="Chromosome"/>
</dbReference>
<dbReference type="Proteomes" id="UP000001009">
    <property type="component" value="Chromosome"/>
</dbReference>
<dbReference type="GO" id="GO:0005737">
    <property type="term" value="C:cytoplasm"/>
    <property type="evidence" value="ECO:0007669"/>
    <property type="project" value="UniProtKB-ARBA"/>
</dbReference>
<dbReference type="GO" id="GO:0015935">
    <property type="term" value="C:small ribosomal subunit"/>
    <property type="evidence" value="ECO:0007669"/>
    <property type="project" value="InterPro"/>
</dbReference>
<dbReference type="GO" id="GO:0019843">
    <property type="term" value="F:rRNA binding"/>
    <property type="evidence" value="ECO:0007669"/>
    <property type="project" value="UniProtKB-UniRule"/>
</dbReference>
<dbReference type="GO" id="GO:0003735">
    <property type="term" value="F:structural constituent of ribosome"/>
    <property type="evidence" value="ECO:0007669"/>
    <property type="project" value="InterPro"/>
</dbReference>
<dbReference type="GO" id="GO:0000028">
    <property type="term" value="P:ribosomal small subunit assembly"/>
    <property type="evidence" value="ECO:0007669"/>
    <property type="project" value="TreeGrafter"/>
</dbReference>
<dbReference type="GO" id="GO:0006412">
    <property type="term" value="P:translation"/>
    <property type="evidence" value="ECO:0007669"/>
    <property type="project" value="UniProtKB-UniRule"/>
</dbReference>
<dbReference type="FunFam" id="3.30.860.10:FF:000001">
    <property type="entry name" value="30S ribosomal protein S19"/>
    <property type="match status" value="1"/>
</dbReference>
<dbReference type="Gene3D" id="3.30.860.10">
    <property type="entry name" value="30s Ribosomal Protein S19, Chain A"/>
    <property type="match status" value="1"/>
</dbReference>
<dbReference type="HAMAP" id="MF_00531">
    <property type="entry name" value="Ribosomal_uS19"/>
    <property type="match status" value="1"/>
</dbReference>
<dbReference type="InterPro" id="IPR002222">
    <property type="entry name" value="Ribosomal_uS19"/>
</dbReference>
<dbReference type="InterPro" id="IPR005732">
    <property type="entry name" value="Ribosomal_uS19_bac-type"/>
</dbReference>
<dbReference type="InterPro" id="IPR020934">
    <property type="entry name" value="Ribosomal_uS19_CS"/>
</dbReference>
<dbReference type="InterPro" id="IPR023575">
    <property type="entry name" value="Ribosomal_uS19_SF"/>
</dbReference>
<dbReference type="NCBIfam" id="TIGR01050">
    <property type="entry name" value="rpsS_bact"/>
    <property type="match status" value="1"/>
</dbReference>
<dbReference type="PANTHER" id="PTHR11880">
    <property type="entry name" value="RIBOSOMAL PROTEIN S19P FAMILY MEMBER"/>
    <property type="match status" value="1"/>
</dbReference>
<dbReference type="PANTHER" id="PTHR11880:SF8">
    <property type="entry name" value="SMALL RIBOSOMAL SUBUNIT PROTEIN US19M"/>
    <property type="match status" value="1"/>
</dbReference>
<dbReference type="Pfam" id="PF00203">
    <property type="entry name" value="Ribosomal_S19"/>
    <property type="match status" value="1"/>
</dbReference>
<dbReference type="PIRSF" id="PIRSF002144">
    <property type="entry name" value="Ribosomal_S19"/>
    <property type="match status" value="1"/>
</dbReference>
<dbReference type="PRINTS" id="PR00975">
    <property type="entry name" value="RIBOSOMALS19"/>
</dbReference>
<dbReference type="SUPFAM" id="SSF54570">
    <property type="entry name" value="Ribosomal protein S19"/>
    <property type="match status" value="1"/>
</dbReference>
<dbReference type="PROSITE" id="PS00323">
    <property type="entry name" value="RIBOSOMAL_S19"/>
    <property type="match status" value="1"/>
</dbReference>
<proteinExistence type="inferred from homology"/>